<organism>
    <name type="scientific">Oryza sativa subsp. japonica</name>
    <name type="common">Rice</name>
    <dbReference type="NCBI Taxonomy" id="39947"/>
    <lineage>
        <taxon>Eukaryota</taxon>
        <taxon>Viridiplantae</taxon>
        <taxon>Streptophyta</taxon>
        <taxon>Embryophyta</taxon>
        <taxon>Tracheophyta</taxon>
        <taxon>Spermatophyta</taxon>
        <taxon>Magnoliopsida</taxon>
        <taxon>Liliopsida</taxon>
        <taxon>Poales</taxon>
        <taxon>Poaceae</taxon>
        <taxon>BOP clade</taxon>
        <taxon>Oryzoideae</taxon>
        <taxon>Oryzeae</taxon>
        <taxon>Oryzinae</taxon>
        <taxon>Oryza</taxon>
        <taxon>Oryza sativa</taxon>
    </lineage>
</organism>
<keyword id="KW-0106">Calcium</keyword>
<keyword id="KW-0449">Lipoprotein</keyword>
<keyword id="KW-0472">Membrane</keyword>
<keyword id="KW-0479">Metal-binding</keyword>
<keyword id="KW-0488">Methylation</keyword>
<keyword id="KW-0564">Palmitate</keyword>
<keyword id="KW-0636">Prenylation</keyword>
<keyword id="KW-1185">Reference proteome</keyword>
<keyword id="KW-0677">Repeat</keyword>
<comment type="function">
    <text evidence="1">Potential calcium sensor.</text>
</comment>
<comment type="subcellular location">
    <subcellularLocation>
        <location evidence="5">Membrane</location>
        <topology evidence="5">Lipid-anchor</topology>
    </subcellularLocation>
</comment>
<comment type="similarity">
    <text evidence="5">Belongs to the calmodulin family.</text>
</comment>
<dbReference type="EMBL" id="DP000011">
    <property type="protein sequence ID" value="ABG21867.1"/>
    <property type="molecule type" value="Genomic_DNA"/>
</dbReference>
<dbReference type="EMBL" id="AP008218">
    <property type="protein sequence ID" value="BAF29099.1"/>
    <property type="molecule type" value="Genomic_DNA"/>
</dbReference>
<dbReference type="EMBL" id="AP014968">
    <property type="protein sequence ID" value="BAT15758.1"/>
    <property type="molecule type" value="Genomic_DNA"/>
</dbReference>
<dbReference type="EMBL" id="AK111834">
    <property type="protein sequence ID" value="BAG99440.1"/>
    <property type="molecule type" value="mRNA"/>
</dbReference>
<dbReference type="EMBL" id="AK119956">
    <property type="protein sequence ID" value="BAG99824.1"/>
    <property type="molecule type" value="mRNA"/>
</dbReference>
<dbReference type="RefSeq" id="XP_015619861.1">
    <property type="nucleotide sequence ID" value="XM_015764375.1"/>
</dbReference>
<dbReference type="SMR" id="Q0IQB6"/>
<dbReference type="FunCoup" id="Q0IQB6">
    <property type="interactions" value="248"/>
</dbReference>
<dbReference type="STRING" id="39947.Q0IQB6"/>
<dbReference type="PaxDb" id="39947-Q0IQB6"/>
<dbReference type="EnsemblPlants" id="Os12t0132300-02">
    <property type="protein sequence ID" value="Os12t0132300-02"/>
    <property type="gene ID" value="Os12g0132300"/>
</dbReference>
<dbReference type="Gramene" id="Os12t0132300-02">
    <property type="protein sequence ID" value="Os12t0132300-02"/>
    <property type="gene ID" value="Os12g0132300"/>
</dbReference>
<dbReference type="KEGG" id="dosa:Os12g0132300"/>
<dbReference type="eggNOG" id="KOG0027">
    <property type="taxonomic scope" value="Eukaryota"/>
</dbReference>
<dbReference type="HOGENOM" id="CLU_061288_2_0_1"/>
<dbReference type="InParanoid" id="Q0IQB6"/>
<dbReference type="OMA" id="ETREAFM"/>
<dbReference type="OrthoDB" id="1851401at2759"/>
<dbReference type="Proteomes" id="UP000000763">
    <property type="component" value="Chromosome 12"/>
</dbReference>
<dbReference type="Proteomes" id="UP000059680">
    <property type="component" value="Chromosome 12"/>
</dbReference>
<dbReference type="GO" id="GO:0005737">
    <property type="term" value="C:cytoplasm"/>
    <property type="evidence" value="ECO:0000318"/>
    <property type="project" value="GO_Central"/>
</dbReference>
<dbReference type="GO" id="GO:0016020">
    <property type="term" value="C:membrane"/>
    <property type="evidence" value="ECO:0007669"/>
    <property type="project" value="UniProtKB-SubCell"/>
</dbReference>
<dbReference type="GO" id="GO:0005509">
    <property type="term" value="F:calcium ion binding"/>
    <property type="evidence" value="ECO:0000318"/>
    <property type="project" value="GO_Central"/>
</dbReference>
<dbReference type="GO" id="GO:0030234">
    <property type="term" value="F:enzyme regulator activity"/>
    <property type="evidence" value="ECO:0000318"/>
    <property type="project" value="GO_Central"/>
</dbReference>
<dbReference type="CDD" id="cd00051">
    <property type="entry name" value="EFh"/>
    <property type="match status" value="2"/>
</dbReference>
<dbReference type="FunFam" id="1.10.238.10:FF:000398">
    <property type="entry name" value="Calmodulin-like protein 3"/>
    <property type="match status" value="1"/>
</dbReference>
<dbReference type="FunFam" id="1.10.238.10:FF:000251">
    <property type="entry name" value="Calmodulin-related protein 97A"/>
    <property type="match status" value="1"/>
</dbReference>
<dbReference type="Gene3D" id="1.10.238.10">
    <property type="entry name" value="EF-hand"/>
    <property type="match status" value="2"/>
</dbReference>
<dbReference type="InterPro" id="IPR050230">
    <property type="entry name" value="CALM/Myosin/TropC-like"/>
</dbReference>
<dbReference type="InterPro" id="IPR011992">
    <property type="entry name" value="EF-hand-dom_pair"/>
</dbReference>
<dbReference type="InterPro" id="IPR018247">
    <property type="entry name" value="EF_Hand_1_Ca_BS"/>
</dbReference>
<dbReference type="InterPro" id="IPR002048">
    <property type="entry name" value="EF_hand_dom"/>
</dbReference>
<dbReference type="PANTHER" id="PTHR23048:SF54">
    <property type="entry name" value="EF-HAND DOMAIN-CONTAINING PROTEIN"/>
    <property type="match status" value="1"/>
</dbReference>
<dbReference type="PANTHER" id="PTHR23048">
    <property type="entry name" value="MYOSIN LIGHT CHAIN 1, 3"/>
    <property type="match status" value="1"/>
</dbReference>
<dbReference type="Pfam" id="PF13499">
    <property type="entry name" value="EF-hand_7"/>
    <property type="match status" value="2"/>
</dbReference>
<dbReference type="SMART" id="SM00054">
    <property type="entry name" value="EFh"/>
    <property type="match status" value="4"/>
</dbReference>
<dbReference type="SUPFAM" id="SSF47473">
    <property type="entry name" value="EF-hand"/>
    <property type="match status" value="1"/>
</dbReference>
<dbReference type="PROSITE" id="PS00018">
    <property type="entry name" value="EF_HAND_1"/>
    <property type="match status" value="4"/>
</dbReference>
<dbReference type="PROSITE" id="PS50222">
    <property type="entry name" value="EF_HAND_2"/>
    <property type="match status" value="4"/>
</dbReference>
<accession>Q0IQB6</accession>
<accession>B7F493</accession>
<accession>H2KX73</accession>
<feature type="chain" id="PRO_0000338418" description="Calmodulin-like protein 3">
    <location>
        <begin position="1"/>
        <end position="180"/>
    </location>
</feature>
<feature type="propeptide" id="PRO_0000396749" description="Removed in mature form" evidence="1">
    <location>
        <begin position="181"/>
        <end position="183"/>
    </location>
</feature>
<feature type="domain" description="EF-hand 1" evidence="3">
    <location>
        <begin position="7"/>
        <end position="42"/>
    </location>
</feature>
<feature type="domain" description="EF-hand 2" evidence="3">
    <location>
        <begin position="43"/>
        <end position="78"/>
    </location>
</feature>
<feature type="domain" description="EF-hand 3" evidence="3">
    <location>
        <begin position="80"/>
        <end position="115"/>
    </location>
</feature>
<feature type="domain" description="EF-hand 4" evidence="3">
    <location>
        <begin position="116"/>
        <end position="151"/>
    </location>
</feature>
<feature type="region of interest" description="Disordered" evidence="4">
    <location>
        <begin position="154"/>
        <end position="183"/>
    </location>
</feature>
<feature type="binding site" evidence="3">
    <location>
        <position position="20"/>
    </location>
    <ligand>
        <name>Ca(2+)</name>
        <dbReference type="ChEBI" id="CHEBI:29108"/>
        <label>1</label>
    </ligand>
</feature>
<feature type="binding site" evidence="3">
    <location>
        <position position="22"/>
    </location>
    <ligand>
        <name>Ca(2+)</name>
        <dbReference type="ChEBI" id="CHEBI:29108"/>
        <label>1</label>
    </ligand>
</feature>
<feature type="binding site" evidence="3">
    <location>
        <position position="24"/>
    </location>
    <ligand>
        <name>Ca(2+)</name>
        <dbReference type="ChEBI" id="CHEBI:29108"/>
        <label>1</label>
    </ligand>
</feature>
<feature type="binding site" evidence="3">
    <location>
        <position position="26"/>
    </location>
    <ligand>
        <name>Ca(2+)</name>
        <dbReference type="ChEBI" id="CHEBI:29108"/>
        <label>1</label>
    </ligand>
</feature>
<feature type="binding site" evidence="3">
    <location>
        <position position="31"/>
    </location>
    <ligand>
        <name>Ca(2+)</name>
        <dbReference type="ChEBI" id="CHEBI:29108"/>
        <label>1</label>
    </ligand>
</feature>
<feature type="binding site" evidence="3">
    <location>
        <position position="56"/>
    </location>
    <ligand>
        <name>Ca(2+)</name>
        <dbReference type="ChEBI" id="CHEBI:29108"/>
        <label>2</label>
    </ligand>
</feature>
<feature type="binding site" evidence="3">
    <location>
        <position position="58"/>
    </location>
    <ligand>
        <name>Ca(2+)</name>
        <dbReference type="ChEBI" id="CHEBI:29108"/>
        <label>2</label>
    </ligand>
</feature>
<feature type="binding site" evidence="3">
    <location>
        <position position="60"/>
    </location>
    <ligand>
        <name>Ca(2+)</name>
        <dbReference type="ChEBI" id="CHEBI:29108"/>
        <label>2</label>
    </ligand>
</feature>
<feature type="binding site" evidence="3">
    <location>
        <position position="62"/>
    </location>
    <ligand>
        <name>Ca(2+)</name>
        <dbReference type="ChEBI" id="CHEBI:29108"/>
        <label>2</label>
    </ligand>
</feature>
<feature type="binding site" evidence="3">
    <location>
        <position position="67"/>
    </location>
    <ligand>
        <name>Ca(2+)</name>
        <dbReference type="ChEBI" id="CHEBI:29108"/>
        <label>2</label>
    </ligand>
</feature>
<feature type="binding site" evidence="3">
    <location>
        <position position="93"/>
    </location>
    <ligand>
        <name>Ca(2+)</name>
        <dbReference type="ChEBI" id="CHEBI:29108"/>
        <label>3</label>
    </ligand>
</feature>
<feature type="binding site" evidence="3">
    <location>
        <position position="95"/>
    </location>
    <ligand>
        <name>Ca(2+)</name>
        <dbReference type="ChEBI" id="CHEBI:29108"/>
        <label>3</label>
    </ligand>
</feature>
<feature type="binding site" evidence="3">
    <location>
        <position position="97"/>
    </location>
    <ligand>
        <name>Ca(2+)</name>
        <dbReference type="ChEBI" id="CHEBI:29108"/>
        <label>3</label>
    </ligand>
</feature>
<feature type="binding site" evidence="3">
    <location>
        <position position="104"/>
    </location>
    <ligand>
        <name>Ca(2+)</name>
        <dbReference type="ChEBI" id="CHEBI:29108"/>
        <label>3</label>
    </ligand>
</feature>
<feature type="binding site" evidence="3">
    <location>
        <position position="129"/>
    </location>
    <ligand>
        <name>Ca(2+)</name>
        <dbReference type="ChEBI" id="CHEBI:29108"/>
        <label>4</label>
    </ligand>
</feature>
<feature type="binding site" evidence="3">
    <location>
        <position position="131"/>
    </location>
    <ligand>
        <name>Ca(2+)</name>
        <dbReference type="ChEBI" id="CHEBI:29108"/>
        <label>4</label>
    </ligand>
</feature>
<feature type="binding site" evidence="3">
    <location>
        <position position="133"/>
    </location>
    <ligand>
        <name>Ca(2+)</name>
        <dbReference type="ChEBI" id="CHEBI:29108"/>
        <label>4</label>
    </ligand>
</feature>
<feature type="binding site" evidence="3">
    <location>
        <position position="135"/>
    </location>
    <ligand>
        <name>Ca(2+)</name>
        <dbReference type="ChEBI" id="CHEBI:29108"/>
        <label>4</label>
    </ligand>
</feature>
<feature type="binding site" evidence="3">
    <location>
        <position position="140"/>
    </location>
    <ligand>
        <name>Ca(2+)</name>
        <dbReference type="ChEBI" id="CHEBI:29108"/>
        <label>4</label>
    </ligand>
</feature>
<feature type="modified residue" description="Cysteine methyl ester" evidence="1">
    <location>
        <position position="180"/>
    </location>
</feature>
<feature type="lipid moiety-binding region" description="S-palmitoyl cysteine" evidence="2">
    <location>
        <position position="173"/>
    </location>
</feature>
<feature type="lipid moiety-binding region" description="S-palmitoyl cysteine" evidence="2">
    <location>
        <position position="174"/>
    </location>
</feature>
<feature type="lipid moiety-binding region" description="S-farnesyl cysteine" evidence="1">
    <location>
        <position position="180"/>
    </location>
</feature>
<evidence type="ECO:0000250" key="1"/>
<evidence type="ECO:0000255" key="2"/>
<evidence type="ECO:0000255" key="3">
    <source>
        <dbReference type="PROSITE-ProRule" id="PRU00448"/>
    </source>
</evidence>
<evidence type="ECO:0000256" key="4">
    <source>
        <dbReference type="SAM" id="MobiDB-lite"/>
    </source>
</evidence>
<evidence type="ECO:0000305" key="5"/>
<gene>
    <name type="primary">CML3</name>
    <name type="ordered locus">Os12g0132300</name>
    <name type="ordered locus">LOC_Os12g03816</name>
</gene>
<sequence length="183" mass="20194">MDHLTKEQIAEFREAFNLFDKDGDGTITSKELGTVMGSLGQSPTEAELKKMVEEVDADGSGSIEFEEFLGLLARKLRDTGAEDDIRDAFRVFDKDQNGFITPDELRHVMANLSDPLSDDELADMLHEADSDGDGQINYNEFLKVMMAKRRQNMMEGHGSGGHRSSNSHKKSGCCGPNSSCTIL</sequence>
<reference key="1">
    <citation type="journal article" date="2005" name="BMC Biol.">
        <title>The sequence of rice chromosomes 11 and 12, rich in disease resistance genes and recent gene duplications.</title>
        <authorList>
            <consortium name="The rice chromosomes 11 and 12 sequencing consortia"/>
        </authorList>
    </citation>
    <scope>NUCLEOTIDE SEQUENCE [LARGE SCALE GENOMIC DNA]</scope>
    <source>
        <strain>cv. Nipponbare</strain>
    </source>
</reference>
<reference key="2">
    <citation type="journal article" date="2005" name="Nature">
        <title>The map-based sequence of the rice genome.</title>
        <authorList>
            <consortium name="International rice genome sequencing project (IRGSP)"/>
        </authorList>
    </citation>
    <scope>NUCLEOTIDE SEQUENCE [LARGE SCALE GENOMIC DNA]</scope>
    <source>
        <strain>cv. Nipponbare</strain>
    </source>
</reference>
<reference key="3">
    <citation type="journal article" date="2008" name="Nucleic Acids Res.">
        <title>The rice annotation project database (RAP-DB): 2008 update.</title>
        <authorList>
            <consortium name="The rice annotation project (RAP)"/>
        </authorList>
    </citation>
    <scope>GENOME REANNOTATION</scope>
    <source>
        <strain>cv. Nipponbare</strain>
    </source>
</reference>
<reference key="4">
    <citation type="journal article" date="2013" name="Rice">
        <title>Improvement of the Oryza sativa Nipponbare reference genome using next generation sequence and optical map data.</title>
        <authorList>
            <person name="Kawahara Y."/>
            <person name="de la Bastide M."/>
            <person name="Hamilton J.P."/>
            <person name="Kanamori H."/>
            <person name="McCombie W.R."/>
            <person name="Ouyang S."/>
            <person name="Schwartz D.C."/>
            <person name="Tanaka T."/>
            <person name="Wu J."/>
            <person name="Zhou S."/>
            <person name="Childs K.L."/>
            <person name="Davidson R.M."/>
            <person name="Lin H."/>
            <person name="Quesada-Ocampo L."/>
            <person name="Vaillancourt B."/>
            <person name="Sakai H."/>
            <person name="Lee S.S."/>
            <person name="Kim J."/>
            <person name="Numa H."/>
            <person name="Itoh T."/>
            <person name="Buell C.R."/>
            <person name="Matsumoto T."/>
        </authorList>
    </citation>
    <scope>GENOME REANNOTATION</scope>
    <source>
        <strain>cv. Nipponbare</strain>
    </source>
</reference>
<reference key="5">
    <citation type="journal article" date="2003" name="Science">
        <title>Collection, mapping, and annotation of over 28,000 cDNA clones from japonica rice.</title>
        <authorList>
            <consortium name="The rice full-length cDNA consortium"/>
        </authorList>
    </citation>
    <scope>NUCLEOTIDE SEQUENCE [LARGE SCALE MRNA]</scope>
    <source>
        <strain>cv. Nipponbare</strain>
    </source>
</reference>
<reference key="6">
    <citation type="journal article" date="2007" name="BMC Plant Biol.">
        <title>Genome-wide identification and analyses of the rice calmodulin and related potential calcium sensor proteins.</title>
        <authorList>
            <person name="Boonburapong B."/>
            <person name="Buaboocha T."/>
        </authorList>
    </citation>
    <scope>GENE FAMILY</scope>
    <scope>NOMENCLATURE</scope>
</reference>
<name>CML3_ORYSJ</name>
<proteinExistence type="evidence at transcript level"/>
<protein>
    <recommendedName>
        <fullName>Calmodulin-like protein 3</fullName>
    </recommendedName>
</protein>